<name>RSGA2_LISIN</name>
<accession>Q92AI9</accession>
<organism>
    <name type="scientific">Listeria innocua serovar 6a (strain ATCC BAA-680 / CLIP 11262)</name>
    <dbReference type="NCBI Taxonomy" id="272626"/>
    <lineage>
        <taxon>Bacteria</taxon>
        <taxon>Bacillati</taxon>
        <taxon>Bacillota</taxon>
        <taxon>Bacilli</taxon>
        <taxon>Bacillales</taxon>
        <taxon>Listeriaceae</taxon>
        <taxon>Listeria</taxon>
    </lineage>
</organism>
<reference key="1">
    <citation type="journal article" date="2001" name="Science">
        <title>Comparative genomics of Listeria species.</title>
        <authorList>
            <person name="Glaser P."/>
            <person name="Frangeul L."/>
            <person name="Buchrieser C."/>
            <person name="Rusniok C."/>
            <person name="Amend A."/>
            <person name="Baquero F."/>
            <person name="Berche P."/>
            <person name="Bloecker H."/>
            <person name="Brandt P."/>
            <person name="Chakraborty T."/>
            <person name="Charbit A."/>
            <person name="Chetouani F."/>
            <person name="Couve E."/>
            <person name="de Daruvar A."/>
            <person name="Dehoux P."/>
            <person name="Domann E."/>
            <person name="Dominguez-Bernal G."/>
            <person name="Duchaud E."/>
            <person name="Durant L."/>
            <person name="Dussurget O."/>
            <person name="Entian K.-D."/>
            <person name="Fsihi H."/>
            <person name="Garcia-del Portillo F."/>
            <person name="Garrido P."/>
            <person name="Gautier L."/>
            <person name="Goebel W."/>
            <person name="Gomez-Lopez N."/>
            <person name="Hain T."/>
            <person name="Hauf J."/>
            <person name="Jackson D."/>
            <person name="Jones L.-M."/>
            <person name="Kaerst U."/>
            <person name="Kreft J."/>
            <person name="Kuhn M."/>
            <person name="Kunst F."/>
            <person name="Kurapkat G."/>
            <person name="Madueno E."/>
            <person name="Maitournam A."/>
            <person name="Mata Vicente J."/>
            <person name="Ng E."/>
            <person name="Nedjari H."/>
            <person name="Nordsiek G."/>
            <person name="Novella S."/>
            <person name="de Pablos B."/>
            <person name="Perez-Diaz J.-C."/>
            <person name="Purcell R."/>
            <person name="Remmel B."/>
            <person name="Rose M."/>
            <person name="Schlueter T."/>
            <person name="Simoes N."/>
            <person name="Tierrez A."/>
            <person name="Vazquez-Boland J.-A."/>
            <person name="Voss H."/>
            <person name="Wehland J."/>
            <person name="Cossart P."/>
        </authorList>
    </citation>
    <scope>NUCLEOTIDE SEQUENCE [LARGE SCALE GENOMIC DNA]</scope>
    <source>
        <strain>ATCC BAA-680 / CLIP 11262</strain>
    </source>
</reference>
<gene>
    <name evidence="1" type="primary">rsgA2</name>
    <name type="ordered locus">lin1933</name>
</gene>
<evidence type="ECO:0000255" key="1">
    <source>
        <dbReference type="HAMAP-Rule" id="MF_01820"/>
    </source>
</evidence>
<evidence type="ECO:0000255" key="2">
    <source>
        <dbReference type="PROSITE-ProRule" id="PRU01058"/>
    </source>
</evidence>
<comment type="function">
    <text evidence="1">One of several proteins that assist in the late maturation steps of the functional core of the 30S ribosomal subunit. Helps release RbfA from mature subunits. May play a role in the assembly of ribosomal proteins into the subunit. Circularly permuted GTPase that catalyzes slow GTP hydrolysis, GTPase activity is stimulated by the 30S ribosomal subunit.</text>
</comment>
<comment type="cofactor">
    <cofactor evidence="1">
        <name>Zn(2+)</name>
        <dbReference type="ChEBI" id="CHEBI:29105"/>
    </cofactor>
    <text evidence="1">Binds 1 zinc ion per subunit.</text>
</comment>
<comment type="subunit">
    <text evidence="1">Monomer. Associates with 30S ribosomal subunit, binds 16S rRNA.</text>
</comment>
<comment type="subcellular location">
    <subcellularLocation>
        <location evidence="1">Cytoplasm</location>
    </subcellularLocation>
</comment>
<comment type="similarity">
    <text evidence="1">Belongs to the TRAFAC class YlqF/YawG GTPase family. RsgA subfamily.</text>
</comment>
<keyword id="KW-0963">Cytoplasm</keyword>
<keyword id="KW-0342">GTP-binding</keyword>
<keyword id="KW-0378">Hydrolase</keyword>
<keyword id="KW-0479">Metal-binding</keyword>
<keyword id="KW-0547">Nucleotide-binding</keyword>
<keyword id="KW-0690">Ribosome biogenesis</keyword>
<keyword id="KW-0694">RNA-binding</keyword>
<keyword id="KW-0699">rRNA-binding</keyword>
<keyword id="KW-0862">Zinc</keyword>
<proteinExistence type="inferred from homology"/>
<feature type="chain" id="PRO_0000171487" description="Small ribosomal subunit biogenesis GTPase RsgA 2">
    <location>
        <begin position="1"/>
        <end position="291"/>
    </location>
</feature>
<feature type="domain" description="CP-type G" evidence="2">
    <location>
        <begin position="63"/>
        <end position="221"/>
    </location>
</feature>
<feature type="binding site" evidence="1">
    <location>
        <begin position="112"/>
        <end position="115"/>
    </location>
    <ligand>
        <name>GTP</name>
        <dbReference type="ChEBI" id="CHEBI:37565"/>
    </ligand>
</feature>
<feature type="binding site" evidence="1">
    <location>
        <begin position="164"/>
        <end position="172"/>
    </location>
    <ligand>
        <name>GTP</name>
        <dbReference type="ChEBI" id="CHEBI:37565"/>
    </ligand>
</feature>
<feature type="binding site" evidence="1">
    <location>
        <position position="245"/>
    </location>
    <ligand>
        <name>Zn(2+)</name>
        <dbReference type="ChEBI" id="CHEBI:29105"/>
    </ligand>
</feature>
<feature type="binding site" evidence="1">
    <location>
        <position position="250"/>
    </location>
    <ligand>
        <name>Zn(2+)</name>
        <dbReference type="ChEBI" id="CHEBI:29105"/>
    </ligand>
</feature>
<feature type="binding site" evidence="1">
    <location>
        <position position="252"/>
    </location>
    <ligand>
        <name>Zn(2+)</name>
        <dbReference type="ChEBI" id="CHEBI:29105"/>
    </ligand>
</feature>
<feature type="binding site" evidence="1">
    <location>
        <position position="258"/>
    </location>
    <ligand>
        <name>Zn(2+)</name>
        <dbReference type="ChEBI" id="CHEBI:29105"/>
    </ligand>
</feature>
<protein>
    <recommendedName>
        <fullName evidence="1">Small ribosomal subunit biogenesis GTPase RsgA 2</fullName>
        <ecNumber evidence="1">3.6.1.-</ecNumber>
    </recommendedName>
</protein>
<dbReference type="EC" id="3.6.1.-" evidence="1"/>
<dbReference type="EMBL" id="AL596170">
    <property type="protein sequence ID" value="CAC97163.1"/>
    <property type="molecule type" value="Genomic_DNA"/>
</dbReference>
<dbReference type="PIR" id="AC1674">
    <property type="entry name" value="AC1674"/>
</dbReference>
<dbReference type="RefSeq" id="WP_010991024.1">
    <property type="nucleotide sequence ID" value="NC_003212.1"/>
</dbReference>
<dbReference type="SMR" id="Q92AI9"/>
<dbReference type="STRING" id="272626.gene:17566291"/>
<dbReference type="GeneID" id="93235271"/>
<dbReference type="KEGG" id="lin:lin1933"/>
<dbReference type="eggNOG" id="COG1162">
    <property type="taxonomic scope" value="Bacteria"/>
</dbReference>
<dbReference type="HOGENOM" id="CLU_033617_2_1_9"/>
<dbReference type="OrthoDB" id="9809485at2"/>
<dbReference type="Proteomes" id="UP000002513">
    <property type="component" value="Chromosome"/>
</dbReference>
<dbReference type="GO" id="GO:0005737">
    <property type="term" value="C:cytoplasm"/>
    <property type="evidence" value="ECO:0007669"/>
    <property type="project" value="UniProtKB-SubCell"/>
</dbReference>
<dbReference type="GO" id="GO:0005525">
    <property type="term" value="F:GTP binding"/>
    <property type="evidence" value="ECO:0007669"/>
    <property type="project" value="UniProtKB-UniRule"/>
</dbReference>
<dbReference type="GO" id="GO:0003924">
    <property type="term" value="F:GTPase activity"/>
    <property type="evidence" value="ECO:0007669"/>
    <property type="project" value="UniProtKB-UniRule"/>
</dbReference>
<dbReference type="GO" id="GO:0046872">
    <property type="term" value="F:metal ion binding"/>
    <property type="evidence" value="ECO:0007669"/>
    <property type="project" value="UniProtKB-KW"/>
</dbReference>
<dbReference type="GO" id="GO:0019843">
    <property type="term" value="F:rRNA binding"/>
    <property type="evidence" value="ECO:0007669"/>
    <property type="project" value="UniProtKB-KW"/>
</dbReference>
<dbReference type="GO" id="GO:0042274">
    <property type="term" value="P:ribosomal small subunit biogenesis"/>
    <property type="evidence" value="ECO:0007669"/>
    <property type="project" value="UniProtKB-UniRule"/>
</dbReference>
<dbReference type="CDD" id="cd04466">
    <property type="entry name" value="S1_YloQ_GTPase"/>
    <property type="match status" value="1"/>
</dbReference>
<dbReference type="CDD" id="cd01854">
    <property type="entry name" value="YjeQ_EngC"/>
    <property type="match status" value="1"/>
</dbReference>
<dbReference type="Gene3D" id="2.40.50.140">
    <property type="entry name" value="Nucleic acid-binding proteins"/>
    <property type="match status" value="1"/>
</dbReference>
<dbReference type="Gene3D" id="3.40.50.300">
    <property type="entry name" value="P-loop containing nucleotide triphosphate hydrolases"/>
    <property type="match status" value="1"/>
</dbReference>
<dbReference type="Gene3D" id="1.10.40.50">
    <property type="entry name" value="Probable gtpase engc, domain 3"/>
    <property type="match status" value="1"/>
</dbReference>
<dbReference type="HAMAP" id="MF_01820">
    <property type="entry name" value="GTPase_RsgA"/>
    <property type="match status" value="1"/>
</dbReference>
<dbReference type="InterPro" id="IPR030378">
    <property type="entry name" value="G_CP_dom"/>
</dbReference>
<dbReference type="InterPro" id="IPR012340">
    <property type="entry name" value="NA-bd_OB-fold"/>
</dbReference>
<dbReference type="InterPro" id="IPR027417">
    <property type="entry name" value="P-loop_NTPase"/>
</dbReference>
<dbReference type="InterPro" id="IPR004881">
    <property type="entry name" value="Ribosome_biogen_GTPase_RsgA"/>
</dbReference>
<dbReference type="InterPro" id="IPR010914">
    <property type="entry name" value="RsgA_GTPase_dom"/>
</dbReference>
<dbReference type="InterPro" id="IPR031944">
    <property type="entry name" value="RsgA_N"/>
</dbReference>
<dbReference type="NCBIfam" id="TIGR00157">
    <property type="entry name" value="ribosome small subunit-dependent GTPase A"/>
    <property type="match status" value="1"/>
</dbReference>
<dbReference type="PANTHER" id="PTHR32120">
    <property type="entry name" value="SMALL RIBOSOMAL SUBUNIT BIOGENESIS GTPASE RSGA"/>
    <property type="match status" value="1"/>
</dbReference>
<dbReference type="PANTHER" id="PTHR32120:SF11">
    <property type="entry name" value="SMALL RIBOSOMAL SUBUNIT BIOGENESIS GTPASE RSGA 1, MITOCHONDRIAL-RELATED"/>
    <property type="match status" value="1"/>
</dbReference>
<dbReference type="Pfam" id="PF03193">
    <property type="entry name" value="RsgA_GTPase"/>
    <property type="match status" value="1"/>
</dbReference>
<dbReference type="Pfam" id="PF16745">
    <property type="entry name" value="RsgA_N"/>
    <property type="match status" value="1"/>
</dbReference>
<dbReference type="SUPFAM" id="SSF50249">
    <property type="entry name" value="Nucleic acid-binding proteins"/>
    <property type="match status" value="1"/>
</dbReference>
<dbReference type="SUPFAM" id="SSF52540">
    <property type="entry name" value="P-loop containing nucleoside triphosphate hydrolases"/>
    <property type="match status" value="1"/>
</dbReference>
<dbReference type="PROSITE" id="PS50936">
    <property type="entry name" value="ENGC_GTPASE"/>
    <property type="match status" value="1"/>
</dbReference>
<dbReference type="PROSITE" id="PS51721">
    <property type="entry name" value="G_CP"/>
    <property type="match status" value="1"/>
</dbReference>
<sequence length="291" mass="32741">MLEGQIIKALSGFYYVFSEGKIYQCRARGNFRKRNISPLVGDDVEFQVENKTDGYILDVLSRENALVRPPVANIDIAILVFSAVEPDFSTNLADRFLVAIEKEDIQPVICISKMDLATDAEKEQIAVYKEVYETIGYDVFVTNDEPDKEAIKDYISGKTAVIAGQSGVGKSTLLNSLNSDLTLKTAEISNSLGRGKHTTRHVELMPIGDGFVADTPGFSSIEWDDLQPETLQFCFPEMEDRRSGCKFRGCMHDNEPNCAVKTAVEANEIADFRYKHYIQILQELKNRKPRY</sequence>